<accession>Q9N4X8</accession>
<dbReference type="EC" id="2.5.1.18"/>
<dbReference type="EMBL" id="FO080245">
    <property type="protein sequence ID" value="CCD62297.1"/>
    <property type="molecule type" value="Genomic_DNA"/>
</dbReference>
<dbReference type="RefSeq" id="NP_503701.1">
    <property type="nucleotide sequence ID" value="NM_071300.9"/>
</dbReference>
<dbReference type="SMR" id="Q9N4X8"/>
<dbReference type="BioGRID" id="43783">
    <property type="interactions" value="13"/>
</dbReference>
<dbReference type="FunCoup" id="Q9N4X8">
    <property type="interactions" value="140"/>
</dbReference>
<dbReference type="IntAct" id="Q9N4X8">
    <property type="interactions" value="1"/>
</dbReference>
<dbReference type="STRING" id="6239.Y45G12C.2a.1"/>
<dbReference type="PaxDb" id="6239-Y45G12C.2"/>
<dbReference type="PeptideAtlas" id="Q9N4X8"/>
<dbReference type="EnsemblMetazoa" id="Y45G12C.2a.1">
    <property type="protein sequence ID" value="Y45G12C.2a.1"/>
    <property type="gene ID" value="WBGene00001758"/>
</dbReference>
<dbReference type="GeneID" id="178725"/>
<dbReference type="KEGG" id="cel:CELE_Y45G12C.2"/>
<dbReference type="UCSC" id="Y45G12C.2.1">
    <property type="organism name" value="c. elegans"/>
</dbReference>
<dbReference type="AGR" id="WB:WBGene00001758"/>
<dbReference type="CTD" id="178725"/>
<dbReference type="WormBase" id="Y45G12C.2">
    <property type="protein sequence ID" value="CE21937"/>
    <property type="gene ID" value="WBGene00001758"/>
    <property type="gene designation" value="gst-10"/>
</dbReference>
<dbReference type="eggNOG" id="KOG1695">
    <property type="taxonomic scope" value="Eukaryota"/>
</dbReference>
<dbReference type="GeneTree" id="ENSGT00970000195984"/>
<dbReference type="HOGENOM" id="CLU_039475_2_0_1"/>
<dbReference type="InParanoid" id="Q9N4X8"/>
<dbReference type="OMA" id="CHIDLSP"/>
<dbReference type="OrthoDB" id="5773568at2759"/>
<dbReference type="PhylomeDB" id="Q9N4X8"/>
<dbReference type="SABIO-RK" id="Q9N4X8"/>
<dbReference type="PRO" id="PR:Q9N4X8"/>
<dbReference type="Proteomes" id="UP000001940">
    <property type="component" value="Chromosome V"/>
</dbReference>
<dbReference type="ExpressionAtlas" id="Q9N4X8">
    <property type="expression patterns" value="baseline and differential"/>
</dbReference>
<dbReference type="GO" id="GO:0005829">
    <property type="term" value="C:cytosol"/>
    <property type="evidence" value="ECO:0000318"/>
    <property type="project" value="GO_Central"/>
</dbReference>
<dbReference type="GO" id="GO:0004364">
    <property type="term" value="F:glutathione transferase activity"/>
    <property type="evidence" value="ECO:0000314"/>
    <property type="project" value="WormBase"/>
</dbReference>
<dbReference type="GO" id="GO:0008340">
    <property type="term" value="P:determination of adult lifespan"/>
    <property type="evidence" value="ECO:0000315"/>
    <property type="project" value="UniProtKB"/>
</dbReference>
<dbReference type="GO" id="GO:0006749">
    <property type="term" value="P:glutathione metabolic process"/>
    <property type="evidence" value="ECO:0000314"/>
    <property type="project" value="WormBase"/>
</dbReference>
<dbReference type="GO" id="GO:0010286">
    <property type="term" value="P:heat acclimation"/>
    <property type="evidence" value="ECO:0000315"/>
    <property type="project" value="UniProtKB"/>
</dbReference>
<dbReference type="GO" id="GO:0042542">
    <property type="term" value="P:response to hydrogen peroxide"/>
    <property type="evidence" value="ECO:0000315"/>
    <property type="project" value="UniProtKB"/>
</dbReference>
<dbReference type="GO" id="GO:0010225">
    <property type="term" value="P:response to UV-C"/>
    <property type="evidence" value="ECO:0000315"/>
    <property type="project" value="UniProtKB"/>
</dbReference>
<dbReference type="CDD" id="cd03076">
    <property type="entry name" value="GST_N_Pi"/>
    <property type="match status" value="1"/>
</dbReference>
<dbReference type="FunFam" id="3.40.30.10:FF:000168">
    <property type="entry name" value="Glutathione S-transferase 2"/>
    <property type="match status" value="1"/>
</dbReference>
<dbReference type="FunFam" id="1.20.1050.10:FF:000020">
    <property type="entry name" value="Glutathione S-transferase P 1"/>
    <property type="match status" value="1"/>
</dbReference>
<dbReference type="Gene3D" id="1.20.1050.10">
    <property type="match status" value="1"/>
</dbReference>
<dbReference type="Gene3D" id="3.40.30.10">
    <property type="entry name" value="Glutaredoxin"/>
    <property type="match status" value="1"/>
</dbReference>
<dbReference type="InterPro" id="IPR010987">
    <property type="entry name" value="Glutathione-S-Trfase_C-like"/>
</dbReference>
<dbReference type="InterPro" id="IPR036282">
    <property type="entry name" value="Glutathione-S-Trfase_C_sf"/>
</dbReference>
<dbReference type="InterPro" id="IPR004045">
    <property type="entry name" value="Glutathione_S-Trfase_N"/>
</dbReference>
<dbReference type="InterPro" id="IPR004046">
    <property type="entry name" value="GST_C"/>
</dbReference>
<dbReference type="InterPro" id="IPR050213">
    <property type="entry name" value="GST_superfamily"/>
</dbReference>
<dbReference type="InterPro" id="IPR036249">
    <property type="entry name" value="Thioredoxin-like_sf"/>
</dbReference>
<dbReference type="PANTHER" id="PTHR11571">
    <property type="entry name" value="GLUTATHIONE S-TRANSFERASE"/>
    <property type="match status" value="1"/>
</dbReference>
<dbReference type="PANTHER" id="PTHR11571:SF120">
    <property type="entry name" value="GST N-TERMINAL DOMAIN-CONTAINING PROTEIN-RELATED"/>
    <property type="match status" value="1"/>
</dbReference>
<dbReference type="Pfam" id="PF14497">
    <property type="entry name" value="GST_C_3"/>
    <property type="match status" value="1"/>
</dbReference>
<dbReference type="Pfam" id="PF02798">
    <property type="entry name" value="GST_N"/>
    <property type="match status" value="1"/>
</dbReference>
<dbReference type="SFLD" id="SFLDG01205">
    <property type="entry name" value="AMPS.1"/>
    <property type="match status" value="1"/>
</dbReference>
<dbReference type="SFLD" id="SFLDG00363">
    <property type="entry name" value="AMPS_(cytGST):_Alpha-__Mu-__Pi"/>
    <property type="match status" value="1"/>
</dbReference>
<dbReference type="SUPFAM" id="SSF47616">
    <property type="entry name" value="GST C-terminal domain-like"/>
    <property type="match status" value="1"/>
</dbReference>
<dbReference type="SUPFAM" id="SSF52833">
    <property type="entry name" value="Thioredoxin-like"/>
    <property type="match status" value="1"/>
</dbReference>
<dbReference type="PROSITE" id="PS50405">
    <property type="entry name" value="GST_CTER"/>
    <property type="match status" value="1"/>
</dbReference>
<dbReference type="PROSITE" id="PS50404">
    <property type="entry name" value="GST_NTER"/>
    <property type="match status" value="1"/>
</dbReference>
<proteinExistence type="evidence at protein level"/>
<sequence length="210" mass="24796">MAVPQLYYFTIRGFGEYIRLLFLDNGIKFEDIRFDYEGNEWQEFKKGMLLGQLPCLKVDGQEIVQTGAIMRHLGRVHGLNGSNEQEATFLDMFFEGVRDVRMKYVRYIYYDEGTREDCVNKTIPEALVKLEELFKAHSGDFIIGNKISYADYILFEELDVYHVLDANILDKFPTLKSFWERMWKRPNLNAYLEKRKADKVWINAIEKGMN</sequence>
<evidence type="ECO:0000250" key="1">
    <source>
        <dbReference type="UniProtKB" id="P09211"/>
    </source>
</evidence>
<evidence type="ECO:0000250" key="2">
    <source>
        <dbReference type="UniProtKB" id="P10299"/>
    </source>
</evidence>
<evidence type="ECO:0000269" key="3">
    <source>
    </source>
</evidence>
<evidence type="ECO:0000269" key="4">
    <source>
    </source>
</evidence>
<evidence type="ECO:0000269" key="5">
    <source>
    </source>
</evidence>
<evidence type="ECO:0000269" key="6">
    <source ref="1"/>
</evidence>
<evidence type="ECO:0000305" key="7"/>
<evidence type="ECO:0000312" key="8">
    <source>
        <dbReference type="WormBase" id="Y45G12C.2"/>
    </source>
</evidence>
<reference evidence="7" key="1">
    <citation type="journal article" date="2001" name="Chem. Biol. Interact.">
        <title>Invertebrate glutathione transferases conjugating 4-hydroxynonenal: CeGST 5.4 from Caenorhabditis elegans.</title>
        <authorList>
            <person name="Engle M.R."/>
            <person name="Singh S.P."/>
            <person name="Nanduri B."/>
            <person name="Ji X."/>
            <person name="Zimniak P."/>
        </authorList>
    </citation>
    <scope>NUCLEOTIDE SEQUENCE [MRNA]</scope>
    <scope>PROTEIN SEQUENCE OF 2-11</scope>
    <scope>FUNCTION</scope>
</reference>
<reference key="2">
    <citation type="journal article" date="1998" name="Science">
        <title>Genome sequence of the nematode C. elegans: a platform for investigating biology.</title>
        <authorList>
            <consortium name="The C. elegans sequencing consortium"/>
        </authorList>
    </citation>
    <scope>NUCLEOTIDE SEQUENCE [LARGE SCALE GENOMIC DNA]</scope>
    <source>
        <strain>Bristol N2</strain>
    </source>
</reference>
<reference evidence="7" key="3">
    <citation type="journal article" date="2005" name="Aging Cell">
        <title>Lifespan and stress resistance of Caenorhabditis elegans are increased by expression of glutathione transferases capable of metabolizing the lipid peroxidation product 4-hydroxynonenal.</title>
        <authorList>
            <person name="Ayyadevara S."/>
            <person name="Engle M.R."/>
            <person name="Singh S.P."/>
            <person name="Dandapat A."/>
            <person name="Lichti C.F."/>
            <person name="Benes H."/>
            <person name="Shmookler Reis R.J."/>
            <person name="Liebau E."/>
            <person name="Zimniak P."/>
        </authorList>
    </citation>
    <scope>FUNCTION</scope>
    <scope>BIOPHYSICOCHEMICAL PROPERTIES</scope>
    <scope>TISSUE SPECIFICITY</scope>
</reference>
<reference evidence="7" key="4">
    <citation type="journal article" date="2005" name="Aging Cell">
        <title>Lifespan extension in hypomorphic daf-2 mutants of Caenorhabditis elegans is partially mediated by glutathione transferase CeGSTP2-2.</title>
        <authorList>
            <person name="Ayyadevara S."/>
            <person name="Dandapat A."/>
            <person name="Singh S.P."/>
            <person name="Benes H."/>
            <person name="Zimniak L."/>
            <person name="Reis R.J.S."/>
            <person name="Zimniak P."/>
        </authorList>
    </citation>
    <scope>FUNCTION</scope>
    <scope>DISRUPTION PHENOTYPE</scope>
</reference>
<reference key="5">
    <citation type="journal article" date="2011" name="PLoS Pathog.">
        <title>Ce-Duox1/BLI-3 generated reactive oxygen species trigger protective SKN-1 activity via p38 MAPK signaling during infection in C. elegans.</title>
        <authorList>
            <person name="Hoeven R.V."/>
            <person name="McCallum K.C."/>
            <person name="Cruz M.R."/>
            <person name="Garsin D.A."/>
        </authorList>
    </citation>
    <scope>FUNCTION</scope>
</reference>
<feature type="initiator methionine" description="Removed" evidence="6">
    <location>
        <position position="1"/>
    </location>
</feature>
<feature type="chain" id="PRO_0000185912" description="Glutathione S-transferase P 10">
    <location>
        <begin position="2"/>
        <end position="210"/>
    </location>
</feature>
<feature type="domain" description="GST N-terminal">
    <location>
        <begin position="2"/>
        <end position="81"/>
    </location>
</feature>
<feature type="domain" description="GST C-terminal">
    <location>
        <begin position="83"/>
        <end position="200"/>
    </location>
</feature>
<feature type="binding site" evidence="1">
    <location>
        <position position="8"/>
    </location>
    <ligand>
        <name>glutathione</name>
        <dbReference type="ChEBI" id="CHEBI:57925"/>
    </ligand>
</feature>
<feature type="binding site" evidence="1">
    <location>
        <position position="41"/>
    </location>
    <ligand>
        <name>glutathione</name>
        <dbReference type="ChEBI" id="CHEBI:57925"/>
    </ligand>
</feature>
<feature type="binding site" evidence="1">
    <location>
        <position position="45"/>
    </location>
    <ligand>
        <name>glutathione</name>
        <dbReference type="ChEBI" id="CHEBI:57925"/>
    </ligand>
</feature>
<feature type="binding site" evidence="1">
    <location>
        <begin position="52"/>
        <end position="53"/>
    </location>
    <ligand>
        <name>glutathione</name>
        <dbReference type="ChEBI" id="CHEBI:57925"/>
    </ligand>
</feature>
<feature type="binding site" evidence="1">
    <location>
        <begin position="65"/>
        <end position="66"/>
    </location>
    <ligand>
        <name>glutathione</name>
        <dbReference type="ChEBI" id="CHEBI:57925"/>
    </ligand>
</feature>
<protein>
    <recommendedName>
        <fullName>Glutathione S-transferase P 10</fullName>
        <ecNumber>2.5.1.18</ecNumber>
    </recommendedName>
    <alternativeName>
        <fullName>GST 5.4</fullName>
    </alternativeName>
    <alternativeName>
        <fullName>GST class-pi</fullName>
    </alternativeName>
    <alternativeName>
        <fullName>GSTP2-2</fullName>
    </alternativeName>
</protein>
<gene>
    <name evidence="8" type="primary">gst-10</name>
    <name type="ORF">Y45G12C.2</name>
</gene>
<organism>
    <name type="scientific">Caenorhabditis elegans</name>
    <dbReference type="NCBI Taxonomy" id="6239"/>
    <lineage>
        <taxon>Eukaryota</taxon>
        <taxon>Metazoa</taxon>
        <taxon>Ecdysozoa</taxon>
        <taxon>Nematoda</taxon>
        <taxon>Chromadorea</taxon>
        <taxon>Rhabditida</taxon>
        <taxon>Rhabditina</taxon>
        <taxon>Rhabditomorpha</taxon>
        <taxon>Rhabditoidea</taxon>
        <taxon>Rhabditidae</taxon>
        <taxon>Peloderinae</taxon>
        <taxon>Caenorhabditis</taxon>
    </lineage>
</organism>
<keyword id="KW-0903">Direct protein sequencing</keyword>
<keyword id="KW-1185">Reference proteome</keyword>
<keyword id="KW-0808">Transferase</keyword>
<name>GSTPA_CAEEL</name>
<comment type="function">
    <text evidence="3 4 5 6">Conjugation of reduced glutathione to a wide number of exogenous and endogenous hydrophobic electrophiles. Responsible for approximately one-third of 4-hydroxy-2-nonenal conjugation (PubMed:16164425, PubMed:16300482, Ref.1). May play a role in the detoxification of reactive oxygen species produced during pathogenic bacterial infection (PubMed:22216003).</text>
</comment>
<comment type="catalytic activity">
    <reaction evidence="2">
        <text>RX + glutathione = an S-substituted glutathione + a halide anion + H(+)</text>
        <dbReference type="Rhea" id="RHEA:16437"/>
        <dbReference type="ChEBI" id="CHEBI:15378"/>
        <dbReference type="ChEBI" id="CHEBI:16042"/>
        <dbReference type="ChEBI" id="CHEBI:17792"/>
        <dbReference type="ChEBI" id="CHEBI:57925"/>
        <dbReference type="ChEBI" id="CHEBI:90779"/>
        <dbReference type="EC" id="2.5.1.18"/>
    </reaction>
</comment>
<comment type="biophysicochemical properties">
    <kinetics>
        <KM evidence="3">50 uM for 4-HNE</KM>
        <Vmax evidence="3">10.3 umol/min/mg enzyme</Vmax>
    </kinetics>
</comment>
<comment type="subunit">
    <text evidence="2 7">Homodimer.</text>
</comment>
<comment type="tissue specificity">
    <text evidence="3">Expressed in cells at the mouth and adjacent to the pharyngeal bulbs of the head and also in the tail.</text>
</comment>
<comment type="disruption phenotype">
    <text evidence="4">Increase in susceptibility to 4-hydroxy-2-nonenal, paraquat and heat shock and a reduced lifespan.</text>
</comment>
<comment type="similarity">
    <text evidence="2">Belongs to the GST superfamily. Pi family.</text>
</comment>